<reference key="1">
    <citation type="journal article" date="2001" name="Gene">
        <title>Homologs of gp91phox: cloning and tissue expression of Nox3, Nox4, and Nox5.</title>
        <authorList>
            <person name="Cheng G."/>
            <person name="Cao Z."/>
            <person name="Xu X."/>
            <person name="van Meir E.G."/>
            <person name="Lambeth J.D."/>
        </authorList>
    </citation>
    <scope>NUCLEOTIDE SEQUENCE [MRNA]</scope>
    <scope>DEVELOPMENTAL STAGE</scope>
    <source>
        <tissue>Fetal kidney</tissue>
    </source>
</reference>
<reference key="2">
    <citation type="journal article" date="2003" name="Nature">
        <title>The DNA sequence and analysis of human chromosome 6.</title>
        <authorList>
            <person name="Mungall A.J."/>
            <person name="Palmer S.A."/>
            <person name="Sims S.K."/>
            <person name="Edwards C.A."/>
            <person name="Ashurst J.L."/>
            <person name="Wilming L."/>
            <person name="Jones M.C."/>
            <person name="Horton R."/>
            <person name="Hunt S.E."/>
            <person name="Scott C.E."/>
            <person name="Gilbert J.G.R."/>
            <person name="Clamp M.E."/>
            <person name="Bethel G."/>
            <person name="Milne S."/>
            <person name="Ainscough R."/>
            <person name="Almeida J.P."/>
            <person name="Ambrose K.D."/>
            <person name="Andrews T.D."/>
            <person name="Ashwell R.I.S."/>
            <person name="Babbage A.K."/>
            <person name="Bagguley C.L."/>
            <person name="Bailey J."/>
            <person name="Banerjee R."/>
            <person name="Barker D.J."/>
            <person name="Barlow K.F."/>
            <person name="Bates K."/>
            <person name="Beare D.M."/>
            <person name="Beasley H."/>
            <person name="Beasley O."/>
            <person name="Bird C.P."/>
            <person name="Blakey S.E."/>
            <person name="Bray-Allen S."/>
            <person name="Brook J."/>
            <person name="Brown A.J."/>
            <person name="Brown J.Y."/>
            <person name="Burford D.C."/>
            <person name="Burrill W."/>
            <person name="Burton J."/>
            <person name="Carder C."/>
            <person name="Carter N.P."/>
            <person name="Chapman J.C."/>
            <person name="Clark S.Y."/>
            <person name="Clark G."/>
            <person name="Clee C.M."/>
            <person name="Clegg S."/>
            <person name="Cobley V."/>
            <person name="Collier R.E."/>
            <person name="Collins J.E."/>
            <person name="Colman L.K."/>
            <person name="Corby N.R."/>
            <person name="Coville G.J."/>
            <person name="Culley K.M."/>
            <person name="Dhami P."/>
            <person name="Davies J."/>
            <person name="Dunn M."/>
            <person name="Earthrowl M.E."/>
            <person name="Ellington A.E."/>
            <person name="Evans K.A."/>
            <person name="Faulkner L."/>
            <person name="Francis M.D."/>
            <person name="Frankish A."/>
            <person name="Frankland J."/>
            <person name="French L."/>
            <person name="Garner P."/>
            <person name="Garnett J."/>
            <person name="Ghori M.J."/>
            <person name="Gilby L.M."/>
            <person name="Gillson C.J."/>
            <person name="Glithero R.J."/>
            <person name="Grafham D.V."/>
            <person name="Grant M."/>
            <person name="Gribble S."/>
            <person name="Griffiths C."/>
            <person name="Griffiths M.N.D."/>
            <person name="Hall R."/>
            <person name="Halls K.S."/>
            <person name="Hammond S."/>
            <person name="Harley J.L."/>
            <person name="Hart E.A."/>
            <person name="Heath P.D."/>
            <person name="Heathcott R."/>
            <person name="Holmes S.J."/>
            <person name="Howden P.J."/>
            <person name="Howe K.L."/>
            <person name="Howell G.R."/>
            <person name="Huckle E."/>
            <person name="Humphray S.J."/>
            <person name="Humphries M.D."/>
            <person name="Hunt A.R."/>
            <person name="Johnson C.M."/>
            <person name="Joy A.A."/>
            <person name="Kay M."/>
            <person name="Keenan S.J."/>
            <person name="Kimberley A.M."/>
            <person name="King A."/>
            <person name="Laird G.K."/>
            <person name="Langford C."/>
            <person name="Lawlor S."/>
            <person name="Leongamornlert D.A."/>
            <person name="Leversha M."/>
            <person name="Lloyd C.R."/>
            <person name="Lloyd D.M."/>
            <person name="Loveland J.E."/>
            <person name="Lovell J."/>
            <person name="Martin S."/>
            <person name="Mashreghi-Mohammadi M."/>
            <person name="Maslen G.L."/>
            <person name="Matthews L."/>
            <person name="McCann O.T."/>
            <person name="McLaren S.J."/>
            <person name="McLay K."/>
            <person name="McMurray A."/>
            <person name="Moore M.J.F."/>
            <person name="Mullikin J.C."/>
            <person name="Niblett D."/>
            <person name="Nickerson T."/>
            <person name="Novik K.L."/>
            <person name="Oliver K."/>
            <person name="Overton-Larty E.K."/>
            <person name="Parker A."/>
            <person name="Patel R."/>
            <person name="Pearce A.V."/>
            <person name="Peck A.I."/>
            <person name="Phillimore B.J.C.T."/>
            <person name="Phillips S."/>
            <person name="Plumb R.W."/>
            <person name="Porter K.M."/>
            <person name="Ramsey Y."/>
            <person name="Ranby S.A."/>
            <person name="Rice C.M."/>
            <person name="Ross M.T."/>
            <person name="Searle S.M."/>
            <person name="Sehra H.K."/>
            <person name="Sheridan E."/>
            <person name="Skuce C.D."/>
            <person name="Smith S."/>
            <person name="Smith M."/>
            <person name="Spraggon L."/>
            <person name="Squares S.L."/>
            <person name="Steward C.A."/>
            <person name="Sycamore N."/>
            <person name="Tamlyn-Hall G."/>
            <person name="Tester J."/>
            <person name="Theaker A.J."/>
            <person name="Thomas D.W."/>
            <person name="Thorpe A."/>
            <person name="Tracey A."/>
            <person name="Tromans A."/>
            <person name="Tubby B."/>
            <person name="Wall M."/>
            <person name="Wallis J.M."/>
            <person name="West A.P."/>
            <person name="White S.S."/>
            <person name="Whitehead S.L."/>
            <person name="Whittaker H."/>
            <person name="Wild A."/>
            <person name="Willey D.J."/>
            <person name="Wilmer T.E."/>
            <person name="Wood J.M."/>
            <person name="Wray P.W."/>
            <person name="Wyatt J.C."/>
            <person name="Young L."/>
            <person name="Younger R.M."/>
            <person name="Bentley D.R."/>
            <person name="Coulson A."/>
            <person name="Durbin R.M."/>
            <person name="Hubbard T."/>
            <person name="Sulston J.E."/>
            <person name="Dunham I."/>
            <person name="Rogers J."/>
            <person name="Beck S."/>
        </authorList>
    </citation>
    <scope>NUCLEOTIDE SEQUENCE [LARGE SCALE GENOMIC DNA]</scope>
</reference>
<reference key="3">
    <citation type="journal article" date="2000" name="Gene">
        <title>NADPH oxidase subunit, gp91phox homologue, preferentially expressed in human colon epithelial cells.</title>
        <authorList>
            <person name="Kikuchi H."/>
            <person name="Hikage M."/>
            <person name="Miyashita H."/>
            <person name="Fukumoto M."/>
        </authorList>
    </citation>
    <scope>NUCLEOTIDE SEQUENCE [MRNA] OF 54-497</scope>
    <scope>DEVELOPMENTAL STAGE</scope>
    <source>
        <tissue>Fetal kidney</tissue>
    </source>
</reference>
<reference key="4">
    <citation type="journal article" date="2004" name="J. Biol. Chem.">
        <title>Nox3 regulation by NOXO1, p47phox, and p67phox.</title>
        <authorList>
            <person name="Cheng G."/>
            <person name="Ritsick D."/>
            <person name="Lambeth J.D."/>
        </authorList>
    </citation>
    <scope>ACTIVITY REGULATION</scope>
    <scope>FUNCTION</scope>
    <scope>CATALYTIC ACTIVITY</scope>
</reference>
<reference key="5">
    <citation type="journal article" date="2005" name="J. Biol. Chem.">
        <title>The NADPH oxidase Nox3 constitutively produces superoxide in a p22phox-dependent manner: its regulation by oxidase organizers and activators.</title>
        <authorList>
            <person name="Ueno N."/>
            <person name="Takeya R."/>
            <person name="Miyano K."/>
            <person name="Kikuchi H."/>
            <person name="Sumimoto H."/>
        </authorList>
    </citation>
    <scope>FUNCTION</scope>
    <scope>MUTAGENESIS OF PRO-413</scope>
    <scope>ACTIVITY REGULATION</scope>
    <scope>INTERACTION WITH CYBA</scope>
    <scope>CATALYTIC ACTIVITY</scope>
</reference>
<keyword id="KW-1003">Cell membrane</keyword>
<keyword id="KW-0325">Glycoprotein</keyword>
<keyword id="KW-0349">Heme</keyword>
<keyword id="KW-0408">Iron</keyword>
<keyword id="KW-0472">Membrane</keyword>
<keyword id="KW-0479">Metal-binding</keyword>
<keyword id="KW-0560">Oxidoreductase</keyword>
<keyword id="KW-1185">Reference proteome</keyword>
<keyword id="KW-0812">Transmembrane</keyword>
<keyword id="KW-1133">Transmembrane helix</keyword>
<feature type="chain" id="PRO_0000227596" description="NADPH oxidase 3">
    <location>
        <begin position="1"/>
        <end position="568"/>
    </location>
</feature>
<feature type="topological domain" description="Cytoplasmic" evidence="2">
    <location>
        <begin position="1"/>
        <end position="13"/>
    </location>
</feature>
<feature type="transmembrane region" description="Helical" evidence="2">
    <location>
        <begin position="14"/>
        <end position="34"/>
    </location>
</feature>
<feature type="topological domain" description="Extracellular" evidence="2">
    <location>
        <begin position="35"/>
        <end position="51"/>
    </location>
</feature>
<feature type="transmembrane region" description="Helical" evidence="2">
    <location>
        <begin position="52"/>
        <end position="72"/>
    </location>
</feature>
<feature type="topological domain" description="Cytoplasmic" evidence="2">
    <location>
        <begin position="73"/>
        <end position="103"/>
    </location>
</feature>
<feature type="transmembrane region" description="Helical" evidence="2">
    <location>
        <begin position="104"/>
        <end position="124"/>
    </location>
</feature>
<feature type="topological domain" description="Extracellular" evidence="2">
    <location>
        <begin position="125"/>
        <end position="167"/>
    </location>
</feature>
<feature type="transmembrane region" description="Helical" evidence="2">
    <location>
        <begin position="168"/>
        <end position="188"/>
    </location>
</feature>
<feature type="topological domain" description="Cytoplasmic" evidence="2">
    <location>
        <begin position="189"/>
        <end position="201"/>
    </location>
</feature>
<feature type="transmembrane region" description="Helical" evidence="2">
    <location>
        <begin position="202"/>
        <end position="222"/>
    </location>
</feature>
<feature type="topological domain" description="Extracellular" evidence="2">
    <location>
        <begin position="223"/>
        <end position="395"/>
    </location>
</feature>
<feature type="transmembrane region" description="Helical" evidence="2">
    <location>
        <begin position="396"/>
        <end position="416"/>
    </location>
</feature>
<feature type="topological domain" description="Cytoplasmic" evidence="2">
    <location>
        <begin position="417"/>
        <end position="568"/>
    </location>
</feature>
<feature type="domain" description="Ferric oxidoreductase">
    <location>
        <begin position="55"/>
        <end position="284"/>
    </location>
</feature>
<feature type="domain" description="FAD-binding FR-type" evidence="3">
    <location>
        <begin position="285"/>
        <end position="395"/>
    </location>
</feature>
<feature type="glycosylation site" description="N-linked (GlcNAc...) asparagine" evidence="2">
    <location>
        <position position="163"/>
    </location>
</feature>
<feature type="glycosylation site" description="N-linked (GlcNAc...) asparagine" evidence="2">
    <location>
        <position position="238"/>
    </location>
</feature>
<feature type="sequence variant" id="VAR_049103" description="In dbSNP:rs3749930.">
    <original>T</original>
    <variation>K</variation>
    <location>
        <position position="171"/>
    </location>
</feature>
<feature type="mutagenesis site" description="Loss of catalytic activity." evidence="7">
    <original>P</original>
    <variation>H</variation>
    <location>
        <position position="413"/>
    </location>
</feature>
<feature type="sequence conflict" description="In Ref. 3; AAG15435." evidence="8" ref="3">
    <original>P</original>
    <variation>S</variation>
    <location>
        <position position="328"/>
    </location>
</feature>
<dbReference type="EC" id="1.6.3.-"/>
<dbReference type="EMBL" id="AF190122">
    <property type="protein sequence ID" value="AAG17121.1"/>
    <property type="molecule type" value="mRNA"/>
</dbReference>
<dbReference type="EMBL" id="AL031773">
    <property type="status" value="NOT_ANNOTATED_CDS"/>
    <property type="molecule type" value="Genomic_DNA"/>
</dbReference>
<dbReference type="EMBL" id="AF229177">
    <property type="protein sequence ID" value="AAG15435.1"/>
    <property type="molecule type" value="mRNA"/>
</dbReference>
<dbReference type="CCDS" id="CCDS5250.1"/>
<dbReference type="RefSeq" id="NP_056533.1">
    <property type="nucleotide sequence ID" value="NM_015718.3"/>
</dbReference>
<dbReference type="SMR" id="Q9HBY0"/>
<dbReference type="BioGRID" id="119079">
    <property type="interactions" value="1"/>
</dbReference>
<dbReference type="FunCoup" id="Q9HBY0">
    <property type="interactions" value="1"/>
</dbReference>
<dbReference type="IntAct" id="Q9HBY0">
    <property type="interactions" value="1"/>
</dbReference>
<dbReference type="STRING" id="9606.ENSP00000159060"/>
<dbReference type="BindingDB" id="Q9HBY0"/>
<dbReference type="ChEMBL" id="CHEMBL1741216"/>
<dbReference type="PeroxiBase" id="5960">
    <property type="entry name" value="HsNOx03"/>
</dbReference>
<dbReference type="TCDB" id="5.B.1.1.4">
    <property type="family name" value="the phagocyte (gp91(phox)) nadph oxidase family"/>
</dbReference>
<dbReference type="GlyCosmos" id="Q9HBY0">
    <property type="glycosylation" value="2 sites, No reported glycans"/>
</dbReference>
<dbReference type="GlyGen" id="Q9HBY0">
    <property type="glycosylation" value="2 sites"/>
</dbReference>
<dbReference type="iPTMnet" id="Q9HBY0"/>
<dbReference type="PhosphoSitePlus" id="Q9HBY0"/>
<dbReference type="BioMuta" id="NOX3"/>
<dbReference type="DMDM" id="74752785"/>
<dbReference type="MassIVE" id="Q9HBY0"/>
<dbReference type="PaxDb" id="9606-ENSP00000159060"/>
<dbReference type="PeptideAtlas" id="Q9HBY0"/>
<dbReference type="ProteomicsDB" id="81611"/>
<dbReference type="Antibodypedia" id="46722">
    <property type="antibodies" value="210 antibodies from 28 providers"/>
</dbReference>
<dbReference type="DNASU" id="50508"/>
<dbReference type="Ensembl" id="ENST00000159060.3">
    <property type="protein sequence ID" value="ENSP00000159060.2"/>
    <property type="gene ID" value="ENSG00000074771.4"/>
</dbReference>
<dbReference type="GeneID" id="50508"/>
<dbReference type="KEGG" id="hsa:50508"/>
<dbReference type="MANE-Select" id="ENST00000159060.3">
    <property type="protein sequence ID" value="ENSP00000159060.2"/>
    <property type="RefSeq nucleotide sequence ID" value="NM_015718.3"/>
    <property type="RefSeq protein sequence ID" value="NP_056533.1"/>
</dbReference>
<dbReference type="UCSC" id="uc003qqm.4">
    <property type="organism name" value="human"/>
</dbReference>
<dbReference type="AGR" id="HGNC:7890"/>
<dbReference type="CTD" id="50508"/>
<dbReference type="DisGeNET" id="50508"/>
<dbReference type="GeneCards" id="NOX3"/>
<dbReference type="HGNC" id="HGNC:7890">
    <property type="gene designation" value="NOX3"/>
</dbReference>
<dbReference type="HPA" id="ENSG00000074771">
    <property type="expression patterns" value="Not detected"/>
</dbReference>
<dbReference type="MIM" id="607105">
    <property type="type" value="gene"/>
</dbReference>
<dbReference type="neXtProt" id="NX_Q9HBY0"/>
<dbReference type="OpenTargets" id="ENSG00000074771"/>
<dbReference type="PharmGKB" id="PA31691"/>
<dbReference type="VEuPathDB" id="HostDB:ENSG00000074771"/>
<dbReference type="eggNOG" id="KOG0039">
    <property type="taxonomic scope" value="Eukaryota"/>
</dbReference>
<dbReference type="GeneTree" id="ENSGT00940000160501"/>
<dbReference type="HOGENOM" id="CLU_005646_3_1_1"/>
<dbReference type="InParanoid" id="Q9HBY0"/>
<dbReference type="OMA" id="DENQAIH"/>
<dbReference type="OrthoDB" id="167398at2759"/>
<dbReference type="PAN-GO" id="Q9HBY0">
    <property type="GO annotations" value="5 GO annotations based on evolutionary models"/>
</dbReference>
<dbReference type="PhylomeDB" id="Q9HBY0"/>
<dbReference type="TreeFam" id="TF105354"/>
<dbReference type="PathwayCommons" id="Q9HBY0"/>
<dbReference type="Reactome" id="R-HSA-5668599">
    <property type="pathway name" value="RHO GTPases Activate NADPH Oxidases"/>
</dbReference>
<dbReference type="Reactome" id="R-HSA-9013149">
    <property type="pathway name" value="RAC1 GTPase cycle"/>
</dbReference>
<dbReference type="Reactome" id="R-HSA-9013423">
    <property type="pathway name" value="RAC3 GTPase cycle"/>
</dbReference>
<dbReference type="SignaLink" id="Q9HBY0"/>
<dbReference type="SIGNOR" id="Q9HBY0"/>
<dbReference type="BioGRID-ORCS" id="50508">
    <property type="hits" value="12 hits in 1136 CRISPR screens"/>
</dbReference>
<dbReference type="GeneWiki" id="NOX3"/>
<dbReference type="GenomeRNAi" id="50508"/>
<dbReference type="Pharos" id="Q9HBY0">
    <property type="development level" value="Tbio"/>
</dbReference>
<dbReference type="PRO" id="PR:Q9HBY0"/>
<dbReference type="Proteomes" id="UP000005640">
    <property type="component" value="Chromosome 6"/>
</dbReference>
<dbReference type="RNAct" id="Q9HBY0">
    <property type="molecule type" value="protein"/>
</dbReference>
<dbReference type="Bgee" id="ENSG00000074771">
    <property type="expression patterns" value="Expressed in frontal cortex and 2 other cell types or tissues"/>
</dbReference>
<dbReference type="GO" id="GO:0005737">
    <property type="term" value="C:cytoplasm"/>
    <property type="evidence" value="ECO:0007669"/>
    <property type="project" value="Ensembl"/>
</dbReference>
<dbReference type="GO" id="GO:0070062">
    <property type="term" value="C:extracellular exosome"/>
    <property type="evidence" value="ECO:0007005"/>
    <property type="project" value="UniProtKB"/>
</dbReference>
<dbReference type="GO" id="GO:0043020">
    <property type="term" value="C:NADPH oxidase complex"/>
    <property type="evidence" value="ECO:0000318"/>
    <property type="project" value="GO_Central"/>
</dbReference>
<dbReference type="GO" id="GO:0005886">
    <property type="term" value="C:plasma membrane"/>
    <property type="evidence" value="ECO:0000250"/>
    <property type="project" value="UniProtKB"/>
</dbReference>
<dbReference type="GO" id="GO:0020037">
    <property type="term" value="F:heme binding"/>
    <property type="evidence" value="ECO:0000250"/>
    <property type="project" value="UniProtKB"/>
</dbReference>
<dbReference type="GO" id="GO:0046872">
    <property type="term" value="F:metal ion binding"/>
    <property type="evidence" value="ECO:0007669"/>
    <property type="project" value="UniProtKB-KW"/>
</dbReference>
<dbReference type="GO" id="GO:0016175">
    <property type="term" value="F:superoxide-generating NAD(P)H oxidase activity"/>
    <property type="evidence" value="ECO:0000314"/>
    <property type="project" value="UniProtKB"/>
</dbReference>
<dbReference type="GO" id="GO:0106292">
    <property type="term" value="F:superoxide-generating NADPH oxidase activity"/>
    <property type="evidence" value="ECO:0007669"/>
    <property type="project" value="RHEA"/>
</dbReference>
<dbReference type="GO" id="GO:0006952">
    <property type="term" value="P:defense response"/>
    <property type="evidence" value="ECO:0000318"/>
    <property type="project" value="GO_Central"/>
</dbReference>
<dbReference type="GO" id="GO:0009590">
    <property type="term" value="P:detection of gravity"/>
    <property type="evidence" value="ECO:0007669"/>
    <property type="project" value="Ensembl"/>
</dbReference>
<dbReference type="GO" id="GO:0048840">
    <property type="term" value="P:otolith development"/>
    <property type="evidence" value="ECO:0007669"/>
    <property type="project" value="Ensembl"/>
</dbReference>
<dbReference type="GO" id="GO:0042554">
    <property type="term" value="P:superoxide anion generation"/>
    <property type="evidence" value="ECO:0000318"/>
    <property type="project" value="GO_Central"/>
</dbReference>
<dbReference type="GO" id="GO:0001659">
    <property type="term" value="P:temperature homeostasis"/>
    <property type="evidence" value="ECO:0007669"/>
    <property type="project" value="Ensembl"/>
</dbReference>
<dbReference type="CDD" id="cd06186">
    <property type="entry name" value="NOX_Duox_like_FAD_NADP"/>
    <property type="match status" value="1"/>
</dbReference>
<dbReference type="FunFam" id="2.40.30.10:FF:000030">
    <property type="entry name" value="cytochrome b-245 heavy chain"/>
    <property type="match status" value="1"/>
</dbReference>
<dbReference type="FunFam" id="3.40.50.80:FF:000004">
    <property type="entry name" value="NADPH oxidase isoform 2"/>
    <property type="match status" value="1"/>
</dbReference>
<dbReference type="Gene3D" id="3.40.50.80">
    <property type="entry name" value="Nucleotide-binding domain of ferredoxin-NADP reductase (FNR) module"/>
    <property type="match status" value="1"/>
</dbReference>
<dbReference type="Gene3D" id="2.40.30.10">
    <property type="entry name" value="Translation factors"/>
    <property type="match status" value="1"/>
</dbReference>
<dbReference type="InterPro" id="IPR000778">
    <property type="entry name" value="Cyt_b245_heavy_chain"/>
</dbReference>
<dbReference type="InterPro" id="IPR013112">
    <property type="entry name" value="FAD-bd_8"/>
</dbReference>
<dbReference type="InterPro" id="IPR017927">
    <property type="entry name" value="FAD-bd_FR_type"/>
</dbReference>
<dbReference type="InterPro" id="IPR013130">
    <property type="entry name" value="Fe3_Rdtase_TM_dom"/>
</dbReference>
<dbReference type="InterPro" id="IPR013121">
    <property type="entry name" value="Fe_red_NAD-bd_6"/>
</dbReference>
<dbReference type="InterPro" id="IPR039261">
    <property type="entry name" value="FNR_nucleotide-bd"/>
</dbReference>
<dbReference type="InterPro" id="IPR050369">
    <property type="entry name" value="RBOH/FRE"/>
</dbReference>
<dbReference type="InterPro" id="IPR017938">
    <property type="entry name" value="Riboflavin_synthase-like_b-brl"/>
</dbReference>
<dbReference type="PANTHER" id="PTHR11972">
    <property type="entry name" value="NADPH OXIDASE"/>
    <property type="match status" value="1"/>
</dbReference>
<dbReference type="PANTHER" id="PTHR11972:SF12">
    <property type="entry name" value="NADPH OXIDASE 3"/>
    <property type="match status" value="1"/>
</dbReference>
<dbReference type="Pfam" id="PF08022">
    <property type="entry name" value="FAD_binding_8"/>
    <property type="match status" value="1"/>
</dbReference>
<dbReference type="Pfam" id="PF01794">
    <property type="entry name" value="Ferric_reduct"/>
    <property type="match status" value="1"/>
</dbReference>
<dbReference type="Pfam" id="PF08030">
    <property type="entry name" value="NAD_binding_6"/>
    <property type="match status" value="1"/>
</dbReference>
<dbReference type="PRINTS" id="PR00466">
    <property type="entry name" value="GP91PHOX"/>
</dbReference>
<dbReference type="SFLD" id="SFLDS00052">
    <property type="entry name" value="Ferric_Reductase_Domain"/>
    <property type="match status" value="1"/>
</dbReference>
<dbReference type="SFLD" id="SFLDG01168">
    <property type="entry name" value="Ferric_reductase_subgroup_(FRE"/>
    <property type="match status" value="1"/>
</dbReference>
<dbReference type="SUPFAM" id="SSF52343">
    <property type="entry name" value="Ferredoxin reductase-like, C-terminal NADP-linked domain"/>
    <property type="match status" value="1"/>
</dbReference>
<dbReference type="SUPFAM" id="SSF63380">
    <property type="entry name" value="Riboflavin synthase domain-like"/>
    <property type="match status" value="1"/>
</dbReference>
<dbReference type="PROSITE" id="PS51384">
    <property type="entry name" value="FAD_FR"/>
    <property type="match status" value="1"/>
</dbReference>
<name>NOX3_HUMAN</name>
<evidence type="ECO:0000250" key="1">
    <source>
        <dbReference type="UniProtKB" id="Q672J9"/>
    </source>
</evidence>
<evidence type="ECO:0000255" key="2"/>
<evidence type="ECO:0000255" key="3">
    <source>
        <dbReference type="PROSITE-ProRule" id="PRU00716"/>
    </source>
</evidence>
<evidence type="ECO:0000269" key="4">
    <source>
    </source>
</evidence>
<evidence type="ECO:0000269" key="5">
    <source>
    </source>
</evidence>
<evidence type="ECO:0000269" key="6">
    <source>
    </source>
</evidence>
<evidence type="ECO:0000269" key="7">
    <source>
    </source>
</evidence>
<evidence type="ECO:0000305" key="8"/>
<sequence length="568" mass="64935">MMGCWILNEGLSTILVLSWLGINFYLFIDTFYWYEEEESFHYTRVILGSTLAWARASALCLNFNCMLILIPVSRNLISFIRGTSICCRGPWRRQLDKNLRFHKLVAYGIAVNATIHIVAHFFNLERYHWSQSEEAQGLLAALSKLGNTPNESYLNPVRTFPTNTTTELLRTIAGVTGLVISLALVLIMTSSTEFIRQASYELFWYTHHVFIVFFLSLAIHGTGRIVRGQTQDSLSLHNITFCRDRYAEWQTVAQCPVPQFSGKEPSAWKWILGPVVLYACERIIRFWRFQQEVVITKVVSHPSGVLELHMKKRGFKMAPGQYILVQCPAISSLEWHPFTLTSAPQEDFFSVHIRAAGDWTAALLEAFGAEGQALQEPWSLPRLAVDGPFGTALTDVFHYPVCVCVAAGIGVTPFAALLKSIWYKCSEAQTPLKLSKVYFYWICRDARAFEWFADLLLSLETRMSEQGKTHFLSYHIFLTGWDENQALHIALHWDENTDVITGLKQKTFYGRPNWNNEFKQIAYNHPSSSIGVFFCGPKALSRTLQKMCHLYSSADPRGVHFYYNKESF</sequence>
<protein>
    <recommendedName>
        <fullName>NADPH oxidase 3</fullName>
        <ecNumber>1.6.3.-</ecNumber>
    </recommendedName>
    <alternativeName>
        <fullName>Mitogenic oxidase 2</fullName>
        <shortName>MOX-2</shortName>
    </alternativeName>
    <alternativeName>
        <fullName>gp91phox homolog 3</fullName>
        <shortName>GP91-3</shortName>
    </alternativeName>
</protein>
<comment type="function">
    <text evidence="1 6 7">NADPH oxidase that catalyzes the generation of superoxide from molecular oxygen utilizing NADPH as an electron donor, upon formation of a complex with CYBA/p22phox (PubMed:15181005, PubMed:15824103). Plays a role in the biogenesis of otoconia/otolith, which are crystalline structures of the inner ear involved in the perception of gravity (By similarity).</text>
</comment>
<comment type="catalytic activity">
    <reaction evidence="6 7">
        <text>NADPH + 2 O2 = 2 superoxide + NADP(+) + H(+)</text>
        <dbReference type="Rhea" id="RHEA:63180"/>
        <dbReference type="ChEBI" id="CHEBI:15378"/>
        <dbReference type="ChEBI" id="CHEBI:15379"/>
        <dbReference type="ChEBI" id="CHEBI:18421"/>
        <dbReference type="ChEBI" id="CHEBI:57783"/>
        <dbReference type="ChEBI" id="CHEBI:58349"/>
    </reaction>
</comment>
<comment type="cofactor">
    <cofactor evidence="1">
        <name>heme</name>
        <dbReference type="ChEBI" id="CHEBI:30413"/>
    </cofactor>
</comment>
<comment type="activity regulation">
    <text evidence="1 6 7">Activated by the ototoxic drug cisplatin (By similarity). Activated by NOXO1. Cooperatively activated by NCF1 and NCF2 or NOXA1 in a phorbol 12-myristate 13-acetate (PMA)-dependent manner. Inhibited by diphenyleneiodonium chloride.</text>
</comment>
<comment type="subunit">
    <text evidence="1 7">Interacts with CYBA/p22phox (PubMed:15824103). Heterodimerization with CYBA/p22phox is essential for its activity and cell membrane localization (By similarity).</text>
</comment>
<comment type="interaction">
    <interactant intactId="EBI-13069010">
        <id>Q9HBY0</id>
    </interactant>
    <interactant intactId="EBI-2680384">
        <id>Q9BQA9</id>
        <label>CYBC1</label>
    </interactant>
    <organismsDiffer>false</organismsDiffer>
    <experiments>3</experiments>
</comment>
<comment type="subcellular location">
    <subcellularLocation>
        <location evidence="1">Cell membrane</location>
        <topology evidence="2">Multi-pass membrane protein</topology>
    </subcellularLocation>
</comment>
<comment type="developmental stage">
    <text evidence="4 5">Expressed in fetal kidney and to a lower extent in liver, lung and spleen.</text>
</comment>
<comment type="PTM">
    <text evidence="1">N-glycosylated in a CYBA/p22phox-dependent manner.</text>
</comment>
<proteinExistence type="evidence at protein level"/>
<gene>
    <name type="primary">NOX3</name>
    <name type="synonym">MOX2</name>
</gene>
<organism>
    <name type="scientific">Homo sapiens</name>
    <name type="common">Human</name>
    <dbReference type="NCBI Taxonomy" id="9606"/>
    <lineage>
        <taxon>Eukaryota</taxon>
        <taxon>Metazoa</taxon>
        <taxon>Chordata</taxon>
        <taxon>Craniata</taxon>
        <taxon>Vertebrata</taxon>
        <taxon>Euteleostomi</taxon>
        <taxon>Mammalia</taxon>
        <taxon>Eutheria</taxon>
        <taxon>Euarchontoglires</taxon>
        <taxon>Primates</taxon>
        <taxon>Haplorrhini</taxon>
        <taxon>Catarrhini</taxon>
        <taxon>Hominidae</taxon>
        <taxon>Homo</taxon>
    </lineage>
</organism>
<accession>Q9HBY0</accession>
<accession>Q9HBJ9</accession>